<name>PUM_DROME</name>
<gene>
    <name type="primary">pum</name>
    <name type="ORF">CG9755</name>
</gene>
<sequence length="1533" mass="157528">MKFLGGNDDRNGRGGVGVGTDAIVGSRGGVSQDAADAAGAAAAAAVGYVFQQRPSPGGVGVGVGGVGGGVPGVGAVGSTLHEAAAAEYAAHFAQKQQQTRWACGDDGHGIDNPDKWKYNPPMNPANAAPGGPPGNGSNGGPGAIGTIGMGSGLGGGGGGGAGGGNNGGSGTNGGLHHQSMAAAAANMAAMQQAAALAKHNHMISQAAAAVAAQQQHQHPHQQHPQQQQQQQQAQNQGHPHHLMGGGNGLGNGNGLGIQHPGQQQQQQQQQQQQQHPGQYNANLLNHAAALGHMSSYAQSGGSMYDHHGGAMHPGMNGGMPKQQPLGPPGAGGPQDYVYMGGQTTVPMGAAMMPPQNQYMNSSAVAAANRNAAITTSTAKKLWEKSDGKGVSSSTPGGPLHPLQIPGIGDPSSVWKDHTWSTQGENILVPPPSRAYAHGGASDTSNSGNAGILSPRDSTCAKVVEYVFSGSPTNKDSSLSGLEPHLRNLKFDDNDKSRDDKEKANSPFDTNGLKKDDQVTNSNGVVNGIDDDKGFNRTPGSRQPSPAEESQPRPPNLLFPPLPFNHMLMDHGQGMGGGLGGVVGSGNGVGGGSGGGGAGGAYAAHQQMAAQMSQLQPPMMNGVGGGMPMAAQSPMLNHQAAGPNHMESPGNLLQQQNFDVQQLFRSQNPGLAAVATNAAAAAAAAAAATSAASAAAAVGAPPVPNGSLQQSQQQQQQQQQQQQQQQMHMAAASQQFLAAQQQAQNAAYAAQQATSYVINPGQEAAPYMGMIAAAQMPYYGVAPWGMYPGNLIPQQGTQPRRPLTPSQQGAENQPYQVIPAFLDHTGSLLMGGPRTGTPMRLVSPAPVLVPPGATRAGPPPPQGPQLYQPQPQTAQQNLYSQQNGSSVGGLALNTSSLTGRRDSFDRSTSAFSPSTMDYTSSGVAAAANAVNSTVAQAAAAAAAAAAARGKWPGAMSGAASGAYGALGAGNASASPLGAPITPPPSAQSCLLGSRAPGAESRQRQQQQQQLAAVGLPATAAAAQAAVAAAANNMFGSNSSIFSNPLAIPGTAAVAAAAAAAAAANSRQVAATAAAAAAVAAAAGGVGGAPQPGRSRLLEDFRNQRYPNLQLRDLANHIVEFSQDQHGSRFIQQKLERATAAEKQMVFSEILAAAYSLMTDVFGNYVIQKFFEFGTPEQKNTLGMQVKGHVLQLALQMYGCRVIQKALESISPEQQQEIVHELDGHVLKCVKDQNGNHVVQKCIECVDPVALQFIINAFKGQVYSLSTHPYGCRVIQRILEHCTAEQTTPILDELHEHTEQLIQDQYGNYVIQHVLEHGKQEDKSILINSVRGKVLVLSQHKFASNVVEKCVTHATRGERTGLIDEVCTFNDNALHVMMKDQYANYVVQKMIDVSEPTQLKKLMTKIRPHMAALRKYTYGKHINAKLEKYYMKITNPITVGTGAGGVPAASSAAAVSSGATSASVTACTSGSSTTTTSTTNSLASPTICSVQENGSAMVVEPSSPDASESSSSVVSGAVNSSLGPIGPPTNGNVVL</sequence>
<protein>
    <recommendedName>
        <fullName>Maternal protein pumilio</fullName>
    </recommendedName>
</protein>
<comment type="function">
    <text evidence="1 7 8 11 12 13">Sequence-specific RNA-binding protein that acts as a post-transcriptional repressor by binding the 3'-UTR of mRNA targets. Binds to an RNA consensus sequence, the Pumilio Response Element (PRE), 5'-UGUANAUA-3', that is related to the Nanos Response Element (NRE) (PubMed:1459455, PubMed:1576962, PubMed:22345517, PubMed:9404893, PubMed:9660969). Mediates post-transcriptional repression of transcripts via different mechanisms: acts via direct recruitment of deadenylase complexes leading to translational inhibition and mRNA degradation (By similarity). Also mediates deadenylation-independent repression by promoting accessibility of miRNAs (PubMed:22345517). Mediates post-transcriptional silencing of E2f mRNA by binding to its 3'-UTR and promoting miRNA regulation (PubMed:22345517). Required for abdominal development and to support proliferation and self-renewal of germ cells. Pum is the only gene required for nanos (nos) activity that is not also required for posterior localization of germline determinants. Pum is required during embryogenesis when nanos activity apparently moves anteriorly from the posterior pole (PubMed:1459455, PubMed:1576962, PubMed:9404893, PubMed:9660969).</text>
</comment>
<comment type="subunit">
    <text evidence="4 5">Interacts with nanos (nos) and brat. Acts via the formation of a quaternary complex composed of pum, nanos, brat and the 3'-UTR mRNA of hb.</text>
</comment>
<comment type="interaction">
    <interactant intactId="EBI-252055">
        <id>P25822</id>
    </interactant>
    <interactant intactId="EBI-3428401">
        <id>A8DY81</id>
        <label>Not1</label>
    </interactant>
    <organismsDiffer>false</organismsDiffer>
    <experiments>3</experiments>
</comment>
<comment type="interaction">
    <interactant intactId="EBI-252055">
        <id>P25822</id>
    </interactant>
    <interactant intactId="EBI-6512918">
        <id>Q94547</id>
        <label>Rga</label>
    </interactant>
    <organismsDiffer>false</organismsDiffer>
    <experiments>3</experiments>
</comment>
<comment type="subcellular location">
    <subcellularLocation>
        <location evidence="8">Cytoplasm</location>
    </subcellularLocation>
    <subcellularLocation>
        <location evidence="9">Cytoplasm</location>
        <location evidence="9">Cytoplasmic ribonucleoprotein granule</location>
    </subcellularLocation>
    <text evidence="8">It is concentrated in the cortical region of the embryo beneath the nuclei.</text>
</comment>
<comment type="alternative products">
    <event type="alternative splicing"/>
    <isoform>
        <id>P25822-1</id>
        <name>A</name>
        <name>C</name>
        <name>D</name>
        <sequence type="displayed"/>
    </isoform>
    <isoform>
        <id>P25822-2</id>
        <name>B</name>
        <sequence type="described" ref="VSP_008216 VSP_008217"/>
    </isoform>
    <isoform>
        <id>P25822-3</id>
        <name>E</name>
        <sequence type="described" ref="VSP_009313 VSP_009314"/>
    </isoform>
</comment>
<comment type="developmental stage">
    <text evidence="7 8">Expressed both maternally and zygotically in embryos.</text>
</comment>
<comment type="domain">
    <text evidence="1">The pumilio repeats mediate the association with RNA by packing together to form a right-handed superhelix that approximates a half donut. RNA-binding occurs on the concave side of the surface. Pum is composed of 8 pumilio repeats of 36 residues; each repeat binds a single nucleotide in its RNA target. Residues at positions 12 and 16 of the pumilio repeat bind each RNA base via hydrogen bonding or van der Waals contacts with the Watson-Crick edge, while the amino acid at position 13 makes a stacking interaction. The recognition of RNA by pumilio repeats is base specific: cysteine and glutamine at position 12 and 16, respectively, bind adenine; asparagine and glutamine bind uracil; and serine and glutamate bind guanine.</text>
</comment>
<comment type="disruption phenotype">
    <text evidence="7">Flies display defective abdomen pattern formation and are embryonic lethal.</text>
</comment>
<comment type="sequence caution" evidence="15">
    <conflict type="frameshift">
        <sequence resource="EMBL-CDS" id="AAX33465"/>
    </conflict>
</comment>
<proteinExistence type="evidence at protein level"/>
<reference key="1">
    <citation type="journal article" date="1992" name="Development">
        <title>The Drosophila pumilio gene: an unusually long transcription unit and an unusual protein.</title>
        <authorList>
            <person name="Macdonald P.M."/>
        </authorList>
    </citation>
    <scope>NUCLEOTIDE SEQUENCE [MRNA] (ISOFORM A)</scope>
    <scope>FUNCTION</scope>
    <scope>SUBCELLULAR LOCATION</scope>
    <scope>DEVELOPMENTAL STAGE</scope>
</reference>
<reference key="2">
    <citation type="journal article" date="1992" name="Genes Dev.">
        <title>Pumilio is essential for function but not for distribution of the Drosophila abdominal determinant Nanos.</title>
        <authorList>
            <person name="Barker D.D."/>
            <person name="Wang C."/>
            <person name="Moore J."/>
            <person name="Dickinson L.K."/>
            <person name="Lehmann R."/>
        </authorList>
    </citation>
    <scope>NUCLEOTIDE SEQUENCE [MRNA] (ISOFORM A)</scope>
    <scope>FUNCTION</scope>
    <scope>DEVELOPMENTAL STAGE</scope>
    <scope>DISRUPTION PHENOTYPE</scope>
    <source>
        <tissue>Embryo</tissue>
    </source>
</reference>
<reference key="3">
    <citation type="journal article" date="2000" name="Science">
        <title>The genome sequence of Drosophila melanogaster.</title>
        <authorList>
            <person name="Adams M.D."/>
            <person name="Celniker S.E."/>
            <person name="Holt R.A."/>
            <person name="Evans C.A."/>
            <person name="Gocayne J.D."/>
            <person name="Amanatides P.G."/>
            <person name="Scherer S.E."/>
            <person name="Li P.W."/>
            <person name="Hoskins R.A."/>
            <person name="Galle R.F."/>
            <person name="George R.A."/>
            <person name="Lewis S.E."/>
            <person name="Richards S."/>
            <person name="Ashburner M."/>
            <person name="Henderson S.N."/>
            <person name="Sutton G.G."/>
            <person name="Wortman J.R."/>
            <person name="Yandell M.D."/>
            <person name="Zhang Q."/>
            <person name="Chen L.X."/>
            <person name="Brandon R.C."/>
            <person name="Rogers Y.-H.C."/>
            <person name="Blazej R.G."/>
            <person name="Champe M."/>
            <person name="Pfeiffer B.D."/>
            <person name="Wan K.H."/>
            <person name="Doyle C."/>
            <person name="Baxter E.G."/>
            <person name="Helt G."/>
            <person name="Nelson C.R."/>
            <person name="Miklos G.L.G."/>
            <person name="Abril J.F."/>
            <person name="Agbayani A."/>
            <person name="An H.-J."/>
            <person name="Andrews-Pfannkoch C."/>
            <person name="Baldwin D."/>
            <person name="Ballew R.M."/>
            <person name="Basu A."/>
            <person name="Baxendale J."/>
            <person name="Bayraktaroglu L."/>
            <person name="Beasley E.M."/>
            <person name="Beeson K.Y."/>
            <person name="Benos P.V."/>
            <person name="Berman B.P."/>
            <person name="Bhandari D."/>
            <person name="Bolshakov S."/>
            <person name="Borkova D."/>
            <person name="Botchan M.R."/>
            <person name="Bouck J."/>
            <person name="Brokstein P."/>
            <person name="Brottier P."/>
            <person name="Burtis K.C."/>
            <person name="Busam D.A."/>
            <person name="Butler H."/>
            <person name="Cadieu E."/>
            <person name="Center A."/>
            <person name="Chandra I."/>
            <person name="Cherry J.M."/>
            <person name="Cawley S."/>
            <person name="Dahlke C."/>
            <person name="Davenport L.B."/>
            <person name="Davies P."/>
            <person name="de Pablos B."/>
            <person name="Delcher A."/>
            <person name="Deng Z."/>
            <person name="Mays A.D."/>
            <person name="Dew I."/>
            <person name="Dietz S.M."/>
            <person name="Dodson K."/>
            <person name="Doup L.E."/>
            <person name="Downes M."/>
            <person name="Dugan-Rocha S."/>
            <person name="Dunkov B.C."/>
            <person name="Dunn P."/>
            <person name="Durbin K.J."/>
            <person name="Evangelista C.C."/>
            <person name="Ferraz C."/>
            <person name="Ferriera S."/>
            <person name="Fleischmann W."/>
            <person name="Fosler C."/>
            <person name="Gabrielian A.E."/>
            <person name="Garg N.S."/>
            <person name="Gelbart W.M."/>
            <person name="Glasser K."/>
            <person name="Glodek A."/>
            <person name="Gong F."/>
            <person name="Gorrell J.H."/>
            <person name="Gu Z."/>
            <person name="Guan P."/>
            <person name="Harris M."/>
            <person name="Harris N.L."/>
            <person name="Harvey D.A."/>
            <person name="Heiman T.J."/>
            <person name="Hernandez J.R."/>
            <person name="Houck J."/>
            <person name="Hostin D."/>
            <person name="Houston K.A."/>
            <person name="Howland T.J."/>
            <person name="Wei M.-H."/>
            <person name="Ibegwam C."/>
            <person name="Jalali M."/>
            <person name="Kalush F."/>
            <person name="Karpen G.H."/>
            <person name="Ke Z."/>
            <person name="Kennison J.A."/>
            <person name="Ketchum K.A."/>
            <person name="Kimmel B.E."/>
            <person name="Kodira C.D."/>
            <person name="Kraft C.L."/>
            <person name="Kravitz S."/>
            <person name="Kulp D."/>
            <person name="Lai Z."/>
            <person name="Lasko P."/>
            <person name="Lei Y."/>
            <person name="Levitsky A.A."/>
            <person name="Li J.H."/>
            <person name="Li Z."/>
            <person name="Liang Y."/>
            <person name="Lin X."/>
            <person name="Liu X."/>
            <person name="Mattei B."/>
            <person name="McIntosh T.C."/>
            <person name="McLeod M.P."/>
            <person name="McPherson D."/>
            <person name="Merkulov G."/>
            <person name="Milshina N.V."/>
            <person name="Mobarry C."/>
            <person name="Morris J."/>
            <person name="Moshrefi A."/>
            <person name="Mount S.M."/>
            <person name="Moy M."/>
            <person name="Murphy B."/>
            <person name="Murphy L."/>
            <person name="Muzny D.M."/>
            <person name="Nelson D.L."/>
            <person name="Nelson D.R."/>
            <person name="Nelson K.A."/>
            <person name="Nixon K."/>
            <person name="Nusskern D.R."/>
            <person name="Pacleb J.M."/>
            <person name="Palazzolo M."/>
            <person name="Pittman G.S."/>
            <person name="Pan S."/>
            <person name="Pollard J."/>
            <person name="Puri V."/>
            <person name="Reese M.G."/>
            <person name="Reinert K."/>
            <person name="Remington K."/>
            <person name="Saunders R.D.C."/>
            <person name="Scheeler F."/>
            <person name="Shen H."/>
            <person name="Shue B.C."/>
            <person name="Siden-Kiamos I."/>
            <person name="Simpson M."/>
            <person name="Skupski M.P."/>
            <person name="Smith T.J."/>
            <person name="Spier E."/>
            <person name="Spradling A.C."/>
            <person name="Stapleton M."/>
            <person name="Strong R."/>
            <person name="Sun E."/>
            <person name="Svirskas R."/>
            <person name="Tector C."/>
            <person name="Turner R."/>
            <person name="Venter E."/>
            <person name="Wang A.H."/>
            <person name="Wang X."/>
            <person name="Wang Z.-Y."/>
            <person name="Wassarman D.A."/>
            <person name="Weinstock G.M."/>
            <person name="Weissenbach J."/>
            <person name="Williams S.M."/>
            <person name="Woodage T."/>
            <person name="Worley K.C."/>
            <person name="Wu D."/>
            <person name="Yang S."/>
            <person name="Yao Q.A."/>
            <person name="Ye J."/>
            <person name="Yeh R.-F."/>
            <person name="Zaveri J.S."/>
            <person name="Zhan M."/>
            <person name="Zhang G."/>
            <person name="Zhao Q."/>
            <person name="Zheng L."/>
            <person name="Zheng X.H."/>
            <person name="Zhong F.N."/>
            <person name="Zhong W."/>
            <person name="Zhou X."/>
            <person name="Zhu S.C."/>
            <person name="Zhu X."/>
            <person name="Smith H.O."/>
            <person name="Gibbs R.A."/>
            <person name="Myers E.W."/>
            <person name="Rubin G.M."/>
            <person name="Venter J.C."/>
        </authorList>
    </citation>
    <scope>NUCLEOTIDE SEQUENCE [LARGE SCALE GENOMIC DNA]</scope>
    <source>
        <strain>Berkeley</strain>
    </source>
</reference>
<reference key="4">
    <citation type="journal article" date="2002" name="Genome Biol.">
        <title>Annotation of the Drosophila melanogaster euchromatic genome: a systematic review.</title>
        <authorList>
            <person name="Misra S."/>
            <person name="Crosby M.A."/>
            <person name="Mungall C.J."/>
            <person name="Matthews B.B."/>
            <person name="Campbell K.S."/>
            <person name="Hradecky P."/>
            <person name="Huang Y."/>
            <person name="Kaminker J.S."/>
            <person name="Millburn G.H."/>
            <person name="Prochnik S.E."/>
            <person name="Smith C.D."/>
            <person name="Tupy J.L."/>
            <person name="Whitfield E.J."/>
            <person name="Bayraktaroglu L."/>
            <person name="Berman B.P."/>
            <person name="Bettencourt B.R."/>
            <person name="Celniker S.E."/>
            <person name="de Grey A.D.N.J."/>
            <person name="Drysdale R.A."/>
            <person name="Harris N.L."/>
            <person name="Richter J."/>
            <person name="Russo S."/>
            <person name="Schroeder A.J."/>
            <person name="Shu S.Q."/>
            <person name="Stapleton M."/>
            <person name="Yamada C."/>
            <person name="Ashburner M."/>
            <person name="Gelbart W.M."/>
            <person name="Rubin G.M."/>
            <person name="Lewis S.E."/>
        </authorList>
    </citation>
    <scope>GENOME REANNOTATION</scope>
    <scope>ALTERNATIVE SPLICING</scope>
    <source>
        <strain>Berkeley</strain>
    </source>
</reference>
<reference key="5">
    <citation type="journal article" date="2002" name="Genome Biol.">
        <title>A Drosophila full-length cDNA resource.</title>
        <authorList>
            <person name="Stapleton M."/>
            <person name="Carlson J.W."/>
            <person name="Brokstein P."/>
            <person name="Yu C."/>
            <person name="Champe M."/>
            <person name="George R.A."/>
            <person name="Guarin H."/>
            <person name="Kronmiller B."/>
            <person name="Pacleb J.M."/>
            <person name="Park S."/>
            <person name="Wan K.H."/>
            <person name="Rubin G.M."/>
            <person name="Celniker S.E."/>
        </authorList>
    </citation>
    <scope>NUCLEOTIDE SEQUENCE [LARGE SCALE MRNA] (ISOFORMS A AND E)</scope>
    <source>
        <strain>Berkeley</strain>
        <tissue>Embryo</tissue>
    </source>
</reference>
<reference key="6">
    <citation type="submission" date="2005-03" db="EMBL/GenBank/DDBJ databases">
        <authorList>
            <person name="Stapleton M."/>
            <person name="Carlson J.W."/>
            <person name="Chavez C."/>
            <person name="Frise E."/>
            <person name="George R.A."/>
            <person name="Pacleb J.M."/>
            <person name="Park S."/>
            <person name="Wan K.H."/>
            <person name="Yu C."/>
            <person name="Rubin G.M."/>
            <person name="Celniker S.E."/>
        </authorList>
    </citation>
    <scope>NUCLEOTIDE SEQUENCE [LARGE SCALE MRNA] (ISOFORM A)</scope>
    <source>
        <strain>Berkeley</strain>
        <tissue>Embryo</tissue>
    </source>
</reference>
<reference key="7">
    <citation type="journal article" date="1997" name="RNA">
        <title>The Pumilio protein binds RNA through a conserved domain that defines a new class of RNA-binding proteins.</title>
        <authorList>
            <person name="Zamore P.D."/>
            <person name="Williamson J.R."/>
            <person name="Lehmann R."/>
        </authorList>
    </citation>
    <scope>RNA-BINDING</scope>
    <scope>FUNCTION</scope>
</reference>
<reference key="8">
    <citation type="journal article" date="1998" name="Mol. Cell">
        <title>The Pumilio RNA-binding domain is also a translational regulator.</title>
        <authorList>
            <person name="Wharton R.P."/>
            <person name="Sonoda J."/>
            <person name="Lee T."/>
            <person name="Patterson M."/>
            <person name="Murata Y."/>
        </authorList>
    </citation>
    <scope>FUNCTION</scope>
    <scope>MUTAGENESIS OF GLY-1330</scope>
</reference>
<reference key="9">
    <citation type="journal article" date="1999" name="Genes Dev.">
        <title>Recruitment of Nanos to hunchback mRNA by Pumilio.</title>
        <authorList>
            <person name="Sonoda J."/>
            <person name="Wharton R.P."/>
        </authorList>
    </citation>
    <scope>INTERACTION WITH NANOS</scope>
    <scope>RNA-BINDING</scope>
</reference>
<reference key="10">
    <citation type="journal article" date="2001" name="Genes Dev.">
        <title>Drosophila Brain tumor is a translational repressor.</title>
        <authorList>
            <person name="Sonoda J."/>
            <person name="Wharton R.P."/>
        </authorList>
    </citation>
    <scope>INTERACTION WITH BRAT AND NANOS</scope>
</reference>
<reference key="11">
    <citation type="journal article" date="2006" name="Neuron">
        <title>Staufen- and FMRP-containing neuronal RNPs are structurally and functionally related to somatic P bodies.</title>
        <authorList>
            <person name="Barbee S.A."/>
            <person name="Estes P.S."/>
            <person name="Cziko A.M."/>
            <person name="Hillebrand J."/>
            <person name="Luedeman R.A."/>
            <person name="Coller J.M."/>
            <person name="Johnson N."/>
            <person name="Howlett I.C."/>
            <person name="Geng C."/>
            <person name="Ueda R."/>
            <person name="Brand A.H."/>
            <person name="Newbury S.F."/>
            <person name="Wilhelm J.E."/>
            <person name="Levine R.B."/>
            <person name="Nakamura A."/>
            <person name="Parker R."/>
            <person name="Ramaswami M."/>
        </authorList>
    </citation>
    <scope>SUBCELLULAR LOCATION</scope>
</reference>
<reference key="12">
    <citation type="journal article" date="2008" name="J. Proteome Res.">
        <title>Phosphoproteome analysis of Drosophila melanogaster embryos.</title>
        <authorList>
            <person name="Zhai B."/>
            <person name="Villen J."/>
            <person name="Beausoleil S.A."/>
            <person name="Mintseris J."/>
            <person name="Gygi S.P."/>
        </authorList>
    </citation>
    <scope>PHOSPHORYLATION [LARGE SCALE ANALYSIS] AT SER-453; SER-468; SER-470; SER-477 AND SER-505</scope>
    <scope>IDENTIFICATION BY MASS SPECTROMETRY</scope>
    <source>
        <tissue>Embryo</tissue>
    </source>
</reference>
<reference key="13">
    <citation type="journal article" date="2012" name="Genes Dev.">
        <title>Pumilio facilitates miRNA regulation of the E2F3 oncogene.</title>
        <authorList>
            <person name="Miles W.O."/>
            <person name="Tschop K."/>
            <person name="Herr A."/>
            <person name="Ji J.Y."/>
            <person name="Dyson N.J."/>
        </authorList>
    </citation>
    <scope>FUNCTION</scope>
    <scope>RNA-BINDING</scope>
</reference>
<reference key="14">
    <citation type="journal article" date="2001" name="Cell">
        <title>Structure of Pumilio reveals similarity between RNA and peptide binding motifs.</title>
        <authorList>
            <person name="Edwards T.A."/>
            <person name="Pyle S.E."/>
            <person name="Wharton R.P."/>
            <person name="Aggarwal A.K."/>
        </authorList>
    </citation>
    <scope>X-RAY CRYSTALLOGRAPHY (2.3 ANGSTROMS) OF 1092-1411</scope>
    <scope>MUTAGENESIS OF ARG-1127; LYS-1167; ARG-1199; HIS-1235; GLY-1330; GLU-1346; CYS-1365; THR-1366; PHE-1367 AND ASN-1368</scope>
</reference>
<keyword id="KW-0002">3D-structure</keyword>
<keyword id="KW-0025">Alternative splicing</keyword>
<keyword id="KW-0963">Cytoplasm</keyword>
<keyword id="KW-0217">Developmental protein</keyword>
<keyword id="KW-0597">Phosphoprotein</keyword>
<keyword id="KW-1185">Reference proteome</keyword>
<keyword id="KW-0677">Repeat</keyword>
<keyword id="KW-0678">Repressor</keyword>
<keyword id="KW-0694">RNA-binding</keyword>
<keyword id="KW-0810">Translation regulation</keyword>
<accession>P25822</accession>
<accession>A4V2K5</accession>
<accession>Q5BIA7</accession>
<accession>Q7YU65</accession>
<accession>Q8IGA8</accession>
<accession>Q9VHH4</accession>
<accession>Q9VHH6</accession>
<organism>
    <name type="scientific">Drosophila melanogaster</name>
    <name type="common">Fruit fly</name>
    <dbReference type="NCBI Taxonomy" id="7227"/>
    <lineage>
        <taxon>Eukaryota</taxon>
        <taxon>Metazoa</taxon>
        <taxon>Ecdysozoa</taxon>
        <taxon>Arthropoda</taxon>
        <taxon>Hexapoda</taxon>
        <taxon>Insecta</taxon>
        <taxon>Pterygota</taxon>
        <taxon>Neoptera</taxon>
        <taxon>Endopterygota</taxon>
        <taxon>Diptera</taxon>
        <taxon>Brachycera</taxon>
        <taxon>Muscomorpha</taxon>
        <taxon>Ephydroidea</taxon>
        <taxon>Drosophilidae</taxon>
        <taxon>Drosophila</taxon>
        <taxon>Sophophora</taxon>
    </lineage>
</organism>
<evidence type="ECO:0000250" key="1">
    <source>
        <dbReference type="UniProtKB" id="Q14671"/>
    </source>
</evidence>
<evidence type="ECO:0000255" key="2">
    <source>
        <dbReference type="PROSITE-ProRule" id="PRU00318"/>
    </source>
</evidence>
<evidence type="ECO:0000256" key="3">
    <source>
        <dbReference type="SAM" id="MobiDB-lite"/>
    </source>
</evidence>
<evidence type="ECO:0000269" key="4">
    <source>
    </source>
</evidence>
<evidence type="ECO:0000269" key="5">
    <source>
    </source>
</evidence>
<evidence type="ECO:0000269" key="6">
    <source>
    </source>
</evidence>
<evidence type="ECO:0000269" key="7">
    <source>
    </source>
</evidence>
<evidence type="ECO:0000269" key="8">
    <source>
    </source>
</evidence>
<evidence type="ECO:0000269" key="9">
    <source>
    </source>
</evidence>
<evidence type="ECO:0000269" key="10">
    <source>
    </source>
</evidence>
<evidence type="ECO:0000269" key="11">
    <source>
    </source>
</evidence>
<evidence type="ECO:0000269" key="12">
    <source>
    </source>
</evidence>
<evidence type="ECO:0000269" key="13">
    <source>
    </source>
</evidence>
<evidence type="ECO:0000303" key="14">
    <source>
    </source>
</evidence>
<evidence type="ECO:0000305" key="15"/>
<evidence type="ECO:0007829" key="16">
    <source>
        <dbReference type="PDB" id="5KLA"/>
    </source>
</evidence>
<dbReference type="EMBL" id="X62589">
    <property type="protein sequence ID" value="CAA44474.1"/>
    <property type="molecule type" value="mRNA"/>
</dbReference>
<dbReference type="EMBL" id="L07943">
    <property type="protein sequence ID" value="AAB59189.1"/>
    <property type="molecule type" value="mRNA"/>
</dbReference>
<dbReference type="EMBL" id="AE014297">
    <property type="protein sequence ID" value="AAF54340.2"/>
    <property type="molecule type" value="Genomic_DNA"/>
</dbReference>
<dbReference type="EMBL" id="AE014297">
    <property type="protein sequence ID" value="AAF54338.2"/>
    <property type="molecule type" value="Genomic_DNA"/>
</dbReference>
<dbReference type="EMBL" id="AE014297">
    <property type="protein sequence ID" value="AAN13409.1"/>
    <property type="molecule type" value="Genomic_DNA"/>
</dbReference>
<dbReference type="EMBL" id="AE014297">
    <property type="protein sequence ID" value="AAN13410.1"/>
    <property type="molecule type" value="Genomic_DNA"/>
</dbReference>
<dbReference type="EMBL" id="AE014297">
    <property type="protein sequence ID" value="AAO41523.1"/>
    <property type="molecule type" value="Genomic_DNA"/>
</dbReference>
<dbReference type="EMBL" id="BT001872">
    <property type="protein sequence ID" value="AAN71644.1"/>
    <property type="molecule type" value="mRNA"/>
</dbReference>
<dbReference type="EMBL" id="BT009970">
    <property type="protein sequence ID" value="AAQ22439.1"/>
    <property type="molecule type" value="mRNA"/>
</dbReference>
<dbReference type="EMBL" id="BT021317">
    <property type="protein sequence ID" value="AAX33465.1"/>
    <property type="status" value="ALT_FRAME"/>
    <property type="molecule type" value="mRNA"/>
</dbReference>
<dbReference type="PIR" id="A46221">
    <property type="entry name" value="A46221"/>
</dbReference>
<dbReference type="RefSeq" id="NP_001262403.1">
    <molecule id="P25822-1"/>
    <property type="nucleotide sequence ID" value="NM_001275474.1"/>
</dbReference>
<dbReference type="RefSeq" id="NP_524285.2">
    <molecule id="P25822-1"/>
    <property type="nucleotide sequence ID" value="NM_079561.4"/>
</dbReference>
<dbReference type="RefSeq" id="NP_731314.1">
    <molecule id="P25822-1"/>
    <property type="nucleotide sequence ID" value="NM_169258.3"/>
</dbReference>
<dbReference type="RefSeq" id="NP_731315.1">
    <molecule id="P25822-1"/>
    <property type="nucleotide sequence ID" value="NM_169259.3"/>
</dbReference>
<dbReference type="RefSeq" id="NP_731316.2">
    <molecule id="P25822-2"/>
    <property type="nucleotide sequence ID" value="NM_169260.4"/>
</dbReference>
<dbReference type="RefSeq" id="NP_788604.1">
    <molecule id="P25822-3"/>
    <property type="nucleotide sequence ID" value="NM_176427.3"/>
</dbReference>
<dbReference type="PDB" id="3H3D">
    <property type="method" value="X-ray"/>
    <property type="resolution" value="2.30 A"/>
    <property type="chains" value="X/Y=1093-1411"/>
</dbReference>
<dbReference type="PDB" id="5KL1">
    <property type="method" value="X-ray"/>
    <property type="resolution" value="3.70 A"/>
    <property type="chains" value="A=1091-1426"/>
</dbReference>
<dbReference type="PDB" id="5KL8">
    <property type="method" value="X-ray"/>
    <property type="resolution" value="4.00 A"/>
    <property type="chains" value="A=1091-1426"/>
</dbReference>
<dbReference type="PDB" id="5KLA">
    <property type="method" value="X-ray"/>
    <property type="resolution" value="1.14 A"/>
    <property type="chains" value="A=1091-1426"/>
</dbReference>
<dbReference type="PDBsum" id="3H3D"/>
<dbReference type="PDBsum" id="5KL1"/>
<dbReference type="PDBsum" id="5KL8"/>
<dbReference type="PDBsum" id="5KLA"/>
<dbReference type="SASBDB" id="P25822"/>
<dbReference type="SMR" id="P25822"/>
<dbReference type="BioGRID" id="66261">
    <property type="interactions" value="58"/>
</dbReference>
<dbReference type="FunCoup" id="P25822">
    <property type="interactions" value="1228"/>
</dbReference>
<dbReference type="IntAct" id="P25822">
    <property type="interactions" value="7"/>
</dbReference>
<dbReference type="MINT" id="P25822"/>
<dbReference type="STRING" id="7227.FBpp0305823"/>
<dbReference type="GlyGen" id="P25822">
    <property type="glycosylation" value="2 sites"/>
</dbReference>
<dbReference type="iPTMnet" id="P25822"/>
<dbReference type="PaxDb" id="7227-FBpp0305823"/>
<dbReference type="DNASU" id="41094"/>
<dbReference type="EnsemblMetazoa" id="FBtr0081990">
    <molecule id="P25822-1"/>
    <property type="protein sequence ID" value="FBpp0081470"/>
    <property type="gene ID" value="FBgn0003165"/>
</dbReference>
<dbReference type="EnsemblMetazoa" id="FBtr0081991">
    <molecule id="P25822-1"/>
    <property type="protein sequence ID" value="FBpp0081471"/>
    <property type="gene ID" value="FBgn0003165"/>
</dbReference>
<dbReference type="EnsemblMetazoa" id="FBtr0081992">
    <molecule id="P25822-1"/>
    <property type="protein sequence ID" value="FBpp0081472"/>
    <property type="gene ID" value="FBgn0003165"/>
</dbReference>
<dbReference type="EnsemblMetazoa" id="FBtr0081993">
    <molecule id="P25822-2"/>
    <property type="protein sequence ID" value="FBpp0081473"/>
    <property type="gene ID" value="FBgn0003165"/>
</dbReference>
<dbReference type="EnsemblMetazoa" id="FBtr0081994">
    <molecule id="P25822-3"/>
    <property type="protein sequence ID" value="FBpp0081474"/>
    <property type="gene ID" value="FBgn0003165"/>
</dbReference>
<dbReference type="EnsemblMetazoa" id="FBtr0333667">
    <molecule id="P25822-1"/>
    <property type="protein sequence ID" value="FBpp0305823"/>
    <property type="gene ID" value="FBgn0003165"/>
</dbReference>
<dbReference type="GeneID" id="41094"/>
<dbReference type="KEGG" id="dme:Dmel_CG9755"/>
<dbReference type="UCSC" id="CG9755-RA">
    <molecule id="P25822-1"/>
    <property type="organism name" value="d. melanogaster"/>
</dbReference>
<dbReference type="AGR" id="FB:FBgn0003165"/>
<dbReference type="CTD" id="41094"/>
<dbReference type="FlyBase" id="FBgn0003165">
    <property type="gene designation" value="pum"/>
</dbReference>
<dbReference type="VEuPathDB" id="VectorBase:FBgn0003165"/>
<dbReference type="eggNOG" id="KOG1488">
    <property type="taxonomic scope" value="Eukaryota"/>
</dbReference>
<dbReference type="GeneTree" id="ENSGT00940000169170"/>
<dbReference type="HOGENOM" id="CLU_004017_0_1_1"/>
<dbReference type="InParanoid" id="P25822"/>
<dbReference type="OMA" id="GDSMRIQ"/>
<dbReference type="OrthoDB" id="668540at2759"/>
<dbReference type="PhylomeDB" id="P25822"/>
<dbReference type="SignaLink" id="P25822"/>
<dbReference type="BioGRID-ORCS" id="41094">
    <property type="hits" value="1 hit in 3 CRISPR screens"/>
</dbReference>
<dbReference type="EvolutionaryTrace" id="P25822"/>
<dbReference type="GenomeRNAi" id="41094"/>
<dbReference type="PRO" id="PR:P25822"/>
<dbReference type="Proteomes" id="UP000000803">
    <property type="component" value="Chromosome 3R"/>
</dbReference>
<dbReference type="Bgee" id="FBgn0003165">
    <property type="expression patterns" value="Expressed in hemocyte (sensu Nematoda and Protostomia) in testis and 296 other cell types or tissues"/>
</dbReference>
<dbReference type="ExpressionAtlas" id="P25822">
    <property type="expression patterns" value="baseline and differential"/>
</dbReference>
<dbReference type="GO" id="GO:0005737">
    <property type="term" value="C:cytoplasm"/>
    <property type="evidence" value="ECO:0000314"/>
    <property type="project" value="FlyBase"/>
</dbReference>
<dbReference type="GO" id="GO:0097482">
    <property type="term" value="C:muscle cell postsynaptic specialization"/>
    <property type="evidence" value="ECO:0000314"/>
    <property type="project" value="FlyBase"/>
</dbReference>
<dbReference type="GO" id="GO:0031594">
    <property type="term" value="C:neuromuscular junction"/>
    <property type="evidence" value="ECO:0000314"/>
    <property type="project" value="FlyBase"/>
</dbReference>
<dbReference type="GO" id="GO:0071598">
    <property type="term" value="C:neuronal ribonucleoprotein granule"/>
    <property type="evidence" value="ECO:0000314"/>
    <property type="project" value="UniProtKB"/>
</dbReference>
<dbReference type="GO" id="GO:0005635">
    <property type="term" value="C:nuclear envelope"/>
    <property type="evidence" value="ECO:0000314"/>
    <property type="project" value="FlyBase"/>
</dbReference>
<dbReference type="GO" id="GO:0005634">
    <property type="term" value="C:nucleus"/>
    <property type="evidence" value="ECO:0000318"/>
    <property type="project" value="GO_Central"/>
</dbReference>
<dbReference type="GO" id="GO:0061176">
    <property type="term" value="C:type Ib terminal bouton"/>
    <property type="evidence" value="ECO:0000314"/>
    <property type="project" value="FlyBase"/>
</dbReference>
<dbReference type="GO" id="GO:0061177">
    <property type="term" value="C:type Is terminal bouton"/>
    <property type="evidence" value="ECO:0000314"/>
    <property type="project" value="FlyBase"/>
</dbReference>
<dbReference type="GO" id="GO:1905762">
    <property type="term" value="F:CCR4-NOT complex binding"/>
    <property type="evidence" value="ECO:0000314"/>
    <property type="project" value="FlyBase"/>
</dbReference>
<dbReference type="GO" id="GO:0003730">
    <property type="term" value="F:mRNA 3'-UTR binding"/>
    <property type="evidence" value="ECO:0000314"/>
    <property type="project" value="UniProtKB"/>
</dbReference>
<dbReference type="GO" id="GO:0000900">
    <property type="term" value="F:mRNA regulatory element binding translation repressor activity"/>
    <property type="evidence" value="ECO:0000314"/>
    <property type="project" value="FlyBase"/>
</dbReference>
<dbReference type="GO" id="GO:0003723">
    <property type="term" value="F:RNA binding"/>
    <property type="evidence" value="ECO:0000353"/>
    <property type="project" value="FlyBase"/>
</dbReference>
<dbReference type="GO" id="GO:1990825">
    <property type="term" value="F:sequence-specific mRNA binding"/>
    <property type="evidence" value="ECO:0000314"/>
    <property type="project" value="FlyBase"/>
</dbReference>
<dbReference type="GO" id="GO:0008595">
    <property type="term" value="P:anterior/posterior axis specification, embryo"/>
    <property type="evidence" value="ECO:0000304"/>
    <property type="project" value="FlyBase"/>
</dbReference>
<dbReference type="GO" id="GO:0048149">
    <property type="term" value="P:behavioral response to ethanol"/>
    <property type="evidence" value="ECO:0000315"/>
    <property type="project" value="FlyBase"/>
</dbReference>
<dbReference type="GO" id="GO:0016477">
    <property type="term" value="P:cell migration"/>
    <property type="evidence" value="ECO:0000304"/>
    <property type="project" value="FlyBase"/>
</dbReference>
<dbReference type="GO" id="GO:0007268">
    <property type="term" value="P:chemical synaptic transmission"/>
    <property type="evidence" value="ECO:0000315"/>
    <property type="project" value="FlyBase"/>
</dbReference>
<dbReference type="GO" id="GO:0048813">
    <property type="term" value="P:dendrite morphogenesis"/>
    <property type="evidence" value="ECO:0000315"/>
    <property type="project" value="FlyBase"/>
</dbReference>
<dbReference type="GO" id="GO:0007281">
    <property type="term" value="P:germ cell development"/>
    <property type="evidence" value="ECO:0000304"/>
    <property type="project" value="FlyBase"/>
</dbReference>
<dbReference type="GO" id="GO:0008354">
    <property type="term" value="P:germ cell migration"/>
    <property type="evidence" value="ECO:0000315"/>
    <property type="project" value="FlyBase"/>
</dbReference>
<dbReference type="GO" id="GO:0008258">
    <property type="term" value="P:head involution"/>
    <property type="evidence" value="ECO:0000315"/>
    <property type="project" value="FlyBase"/>
</dbReference>
<dbReference type="GO" id="GO:0007616">
    <property type="term" value="P:long-term memory"/>
    <property type="evidence" value="ECO:0000315"/>
    <property type="project" value="FlyBase"/>
</dbReference>
<dbReference type="GO" id="GO:0000278">
    <property type="term" value="P:mitotic cell cycle"/>
    <property type="evidence" value="ECO:0000304"/>
    <property type="project" value="FlyBase"/>
</dbReference>
<dbReference type="GO" id="GO:0050804">
    <property type="term" value="P:modulation of chemical synaptic transmission"/>
    <property type="evidence" value="ECO:0000315"/>
    <property type="project" value="FlyBase"/>
</dbReference>
<dbReference type="GO" id="GO:0045786">
    <property type="term" value="P:negative regulation of cell cycle"/>
    <property type="evidence" value="ECO:0000304"/>
    <property type="project" value="FlyBase"/>
</dbReference>
<dbReference type="GO" id="GO:0045892">
    <property type="term" value="P:negative regulation of DNA-templated transcription"/>
    <property type="evidence" value="ECO:0000304"/>
    <property type="project" value="FlyBase"/>
</dbReference>
<dbReference type="GO" id="GO:0042059">
    <property type="term" value="P:negative regulation of epidermal growth factor receptor signaling pathway"/>
    <property type="evidence" value="ECO:0000315"/>
    <property type="project" value="FlyBase"/>
</dbReference>
<dbReference type="GO" id="GO:0017148">
    <property type="term" value="P:negative regulation of translation"/>
    <property type="evidence" value="ECO:0000304"/>
    <property type="project" value="FlyBase"/>
</dbReference>
<dbReference type="GO" id="GO:0000288">
    <property type="term" value="P:nuclear-transcribed mRNA catabolic process, deadenylation-dependent decay"/>
    <property type="evidence" value="ECO:0000304"/>
    <property type="project" value="FlyBase"/>
</dbReference>
<dbReference type="GO" id="GO:0048477">
    <property type="term" value="P:oogenesis"/>
    <property type="evidence" value="ECO:0000304"/>
    <property type="project" value="FlyBase"/>
</dbReference>
<dbReference type="GO" id="GO:1901835">
    <property type="term" value="P:positive regulation of deadenylation-independent decapping of nuclear-transcribed mRNA"/>
    <property type="evidence" value="ECO:0000315"/>
    <property type="project" value="FlyBase"/>
</dbReference>
<dbReference type="GO" id="GO:1900153">
    <property type="term" value="P:positive regulation of nuclear-transcribed mRNA catabolic process, deadenylation-dependent decay"/>
    <property type="evidence" value="ECO:0000315"/>
    <property type="project" value="FlyBase"/>
</dbReference>
<dbReference type="GO" id="GO:0060213">
    <property type="term" value="P:positive regulation of nuclear-transcribed mRNA poly(A) tail shortening"/>
    <property type="evidence" value="ECO:0000314"/>
    <property type="project" value="FlyBase"/>
</dbReference>
<dbReference type="GO" id="GO:0045727">
    <property type="term" value="P:positive regulation of translation"/>
    <property type="evidence" value="ECO:0000304"/>
    <property type="project" value="FlyBase"/>
</dbReference>
<dbReference type="GO" id="GO:0016441">
    <property type="term" value="P:post-transcriptional gene silencing"/>
    <property type="evidence" value="ECO:0000314"/>
    <property type="project" value="UniProtKB"/>
</dbReference>
<dbReference type="GO" id="GO:0010608">
    <property type="term" value="P:post-transcriptional regulation of gene expression"/>
    <property type="evidence" value="ECO:0000318"/>
    <property type="project" value="GO_Central"/>
</dbReference>
<dbReference type="GO" id="GO:0008582">
    <property type="term" value="P:regulation of synaptic assembly at neuromuscular junction"/>
    <property type="evidence" value="ECO:0000314"/>
    <property type="project" value="FlyBase"/>
</dbReference>
<dbReference type="CDD" id="cd07920">
    <property type="entry name" value="Pumilio"/>
    <property type="match status" value="1"/>
</dbReference>
<dbReference type="FunFam" id="1.25.10.10:FF:000004">
    <property type="entry name" value="Pumilio homolog 1 isoform 2"/>
    <property type="match status" value="1"/>
</dbReference>
<dbReference type="Gene3D" id="1.25.10.10">
    <property type="entry name" value="Leucine-rich Repeat Variant"/>
    <property type="match status" value="1"/>
</dbReference>
<dbReference type="InterPro" id="IPR011989">
    <property type="entry name" value="ARM-like"/>
</dbReference>
<dbReference type="InterPro" id="IPR016024">
    <property type="entry name" value="ARM-type_fold"/>
</dbReference>
<dbReference type="InterPro" id="IPR033133">
    <property type="entry name" value="PUM-HD"/>
</dbReference>
<dbReference type="InterPro" id="IPR033712">
    <property type="entry name" value="Pumilio_RNA-bd"/>
</dbReference>
<dbReference type="InterPro" id="IPR001313">
    <property type="entry name" value="Pumilio_RNA-bd_rpt"/>
</dbReference>
<dbReference type="PANTHER" id="PTHR12537:SF12">
    <property type="entry name" value="MATERNAL PROTEIN PUMILIO"/>
    <property type="match status" value="1"/>
</dbReference>
<dbReference type="PANTHER" id="PTHR12537">
    <property type="entry name" value="RNA BINDING PROTEIN PUMILIO-RELATED"/>
    <property type="match status" value="1"/>
</dbReference>
<dbReference type="Pfam" id="PF00806">
    <property type="entry name" value="PUF"/>
    <property type="match status" value="8"/>
</dbReference>
<dbReference type="SMART" id="SM00025">
    <property type="entry name" value="Pumilio"/>
    <property type="match status" value="8"/>
</dbReference>
<dbReference type="SUPFAM" id="SSF48371">
    <property type="entry name" value="ARM repeat"/>
    <property type="match status" value="1"/>
</dbReference>
<dbReference type="PROSITE" id="PS50302">
    <property type="entry name" value="PUM"/>
    <property type="match status" value="8"/>
</dbReference>
<dbReference type="PROSITE" id="PS50303">
    <property type="entry name" value="PUM_HD"/>
    <property type="match status" value="1"/>
</dbReference>
<feature type="chain" id="PRO_0000075916" description="Maternal protein pumilio">
    <location>
        <begin position="1"/>
        <end position="1533"/>
    </location>
</feature>
<feature type="domain" description="PUM-HD" evidence="2">
    <location>
        <begin position="1091"/>
        <end position="1428"/>
    </location>
</feature>
<feature type="repeat" description="Pumilio 1">
    <location>
        <begin position="1111"/>
        <end position="1146"/>
    </location>
</feature>
<feature type="repeat" description="Pumilio 2">
    <location>
        <begin position="1147"/>
        <end position="1182"/>
    </location>
</feature>
<feature type="repeat" description="Pumilio 3">
    <location>
        <begin position="1183"/>
        <end position="1218"/>
    </location>
</feature>
<feature type="repeat" description="Pumilio 4">
    <location>
        <begin position="1219"/>
        <end position="1254"/>
    </location>
</feature>
<feature type="repeat" description="Pumilio 5">
    <location>
        <begin position="1255"/>
        <end position="1290"/>
    </location>
</feature>
<feature type="repeat" description="Pumilio 6">
    <location>
        <begin position="1291"/>
        <end position="1326"/>
    </location>
</feature>
<feature type="repeat" description="Pumilio 7">
    <location>
        <begin position="1327"/>
        <end position="1362"/>
    </location>
</feature>
<feature type="repeat" description="Pumilio 8">
    <location>
        <begin position="1366"/>
        <end position="1402"/>
    </location>
</feature>
<feature type="region of interest" description="Disordered" evidence="3">
    <location>
        <begin position="102"/>
        <end position="149"/>
    </location>
</feature>
<feature type="region of interest" description="Disordered" evidence="3">
    <location>
        <begin position="207"/>
        <end position="276"/>
    </location>
</feature>
<feature type="region of interest" description="Disordered" evidence="3">
    <location>
        <begin position="304"/>
        <end position="331"/>
    </location>
</feature>
<feature type="region of interest" description="Disordered" evidence="3">
    <location>
        <begin position="382"/>
        <end position="452"/>
    </location>
</feature>
<feature type="region of interest" description="Disordered" evidence="3">
    <location>
        <begin position="470"/>
        <end position="558"/>
    </location>
</feature>
<feature type="region of interest" description="Disordered" evidence="3">
    <location>
        <begin position="697"/>
        <end position="725"/>
    </location>
</feature>
<feature type="region of interest" description="Disordered" evidence="3">
    <location>
        <begin position="846"/>
        <end position="912"/>
    </location>
</feature>
<feature type="region of interest" description="Disordered" evidence="3">
    <location>
        <begin position="975"/>
        <end position="1008"/>
    </location>
</feature>
<feature type="region of interest" description="Adenine-nucleotide binding in RNA target" evidence="1">
    <location>
        <begin position="1126"/>
        <end position="1130"/>
    </location>
</feature>
<feature type="region of interest" description="Uracil-nucleotide binding in RNA target" evidence="1">
    <location>
        <begin position="1162"/>
        <end position="1166"/>
    </location>
</feature>
<feature type="region of interest" description="Adenine-nucleotide binding in RNA target" evidence="1">
    <location>
        <begin position="1198"/>
        <end position="1202"/>
    </location>
</feature>
<feature type="region of interest" description="Non-specific-nucleotide binding in RNA target" evidence="1">
    <location>
        <begin position="1234"/>
        <end position="1238"/>
    </location>
</feature>
<feature type="region of interest" description="Adenine-nucleotide binding in RNA target" evidence="1">
    <location>
        <begin position="1270"/>
        <end position="1274"/>
    </location>
</feature>
<feature type="region of interest" description="Uracil-nucleotide binding in RNA target" evidence="1">
    <location>
        <begin position="1306"/>
        <end position="1310"/>
    </location>
</feature>
<feature type="region of interest" description="Guanine-nucleotide binding in RNA target" evidence="1">
    <location>
        <begin position="1342"/>
        <end position="1346"/>
    </location>
</feature>
<feature type="region of interest" description="Uracil-nucleotide binding in RNA target" evidence="1">
    <location>
        <begin position="1382"/>
        <end position="1386"/>
    </location>
</feature>
<feature type="region of interest" description="Disordered" evidence="3">
    <location>
        <begin position="1494"/>
        <end position="1533"/>
    </location>
</feature>
<feature type="compositionally biased region" description="Basic and acidic residues" evidence="3">
    <location>
        <begin position="103"/>
        <end position="117"/>
    </location>
</feature>
<feature type="compositionally biased region" description="Gly residues" evidence="3">
    <location>
        <begin position="133"/>
        <end position="149"/>
    </location>
</feature>
<feature type="compositionally biased region" description="Low complexity" evidence="3">
    <location>
        <begin position="207"/>
        <end position="237"/>
    </location>
</feature>
<feature type="compositionally biased region" description="Gly residues" evidence="3">
    <location>
        <begin position="243"/>
        <end position="255"/>
    </location>
</feature>
<feature type="compositionally biased region" description="Low complexity" evidence="3">
    <location>
        <begin position="256"/>
        <end position="276"/>
    </location>
</feature>
<feature type="compositionally biased region" description="Polar residues" evidence="3">
    <location>
        <begin position="470"/>
        <end position="479"/>
    </location>
</feature>
<feature type="compositionally biased region" description="Basic and acidic residues" evidence="3">
    <location>
        <begin position="483"/>
        <end position="503"/>
    </location>
</feature>
<feature type="compositionally biased region" description="Low complexity" evidence="3">
    <location>
        <begin position="863"/>
        <end position="875"/>
    </location>
</feature>
<feature type="compositionally biased region" description="Low complexity" evidence="3">
    <location>
        <begin position="1496"/>
        <end position="1519"/>
    </location>
</feature>
<feature type="modified residue" description="Phosphoserine" evidence="10">
    <location>
        <position position="453"/>
    </location>
</feature>
<feature type="modified residue" description="Phosphoserine" evidence="10">
    <location>
        <position position="468"/>
    </location>
</feature>
<feature type="modified residue" description="Phosphoserine" evidence="10">
    <location>
        <position position="470"/>
    </location>
</feature>
<feature type="modified residue" description="Phosphoserine" evidence="10">
    <location>
        <position position="477"/>
    </location>
</feature>
<feature type="modified residue" description="Phosphoserine" evidence="10">
    <location>
        <position position="505"/>
    </location>
</feature>
<feature type="splice variant" id="VSP_009313" description="In isoform E." evidence="14">
    <location>
        <begin position="1"/>
        <end position="598"/>
    </location>
</feature>
<feature type="splice variant" id="VSP_008216" description="In isoform B." evidence="15">
    <location>
        <begin position="1"/>
        <end position="348"/>
    </location>
</feature>
<feature type="splice variant" id="VSP_008217" description="In isoform B." evidence="15">
    <original>AAMMPPQNQYMNSSAVAAANRNAA</original>
    <variation>MMKLLHDFILDARTAEDVALTQEM</variation>
    <location>
        <begin position="349"/>
        <end position="372"/>
    </location>
</feature>
<feature type="splice variant" id="VSP_009314" description="In isoform E." evidence="14">
    <original>GAYAAHQQMAAQMSQLQPPMMNGVGGGMPMAAQSPMLNHQAAGPNHMESPGNLLQQQNFDV</original>
    <variation>MVVLETASALLGGPYAQGAPALKMVQKRYIGLHHWLGPIRSKELKEHIVSDDVLSLAFNHN</variation>
    <location>
        <begin position="599"/>
        <end position="659"/>
    </location>
</feature>
<feature type="mutagenesis site" description="Disrupts RNA-binding." evidence="6">
    <original>R</original>
    <variation>A</variation>
    <location>
        <position position="1127"/>
    </location>
</feature>
<feature type="mutagenesis site" description="Disrupts RNA-binding." evidence="6">
    <original>K</original>
    <variation>A</variation>
    <location>
        <position position="1167"/>
    </location>
</feature>
<feature type="mutagenesis site" description="Disrupts RNA-binding." evidence="6">
    <original>R</original>
    <variation>A</variation>
    <location>
        <position position="1199"/>
    </location>
</feature>
<feature type="mutagenesis site" description="Disrupts RNA-binding." evidence="6">
    <original>H</original>
    <variation>A</variation>
    <location>
        <position position="1235"/>
    </location>
</feature>
<feature type="mutagenesis site" description="In Pum680; abolishes interaction with brat and translational repression activity but not RNA-binding activity." evidence="6 13">
    <original>G</original>
    <variation>D</variation>
    <location>
        <position position="1330"/>
    </location>
</feature>
<feature type="mutagenesis site" description="Disrupts RNA-binding." evidence="6">
    <original>E</original>
    <variation>K</variation>
    <location>
        <position position="1346"/>
    </location>
</feature>
<feature type="mutagenesis site" description="Abolishes interaction with brat." evidence="6">
    <original>C</original>
    <variation>R</variation>
    <location>
        <position position="1365"/>
    </location>
</feature>
<feature type="mutagenesis site" description="Abolishes interaction with brat." evidence="6">
    <original>T</original>
    <variation>D</variation>
    <location>
        <position position="1366"/>
    </location>
</feature>
<feature type="mutagenesis site" description="Abolishes interaction with nanos." evidence="6">
    <original>F</original>
    <variation>S</variation>
    <location>
        <position position="1367"/>
    </location>
</feature>
<feature type="mutagenesis site" description="Abolishes interaction with brat." evidence="6">
    <original>N</original>
    <variation>S</variation>
    <location>
        <position position="1368"/>
    </location>
</feature>
<feature type="sequence conflict" description="In Ref. 1; CAA44474." evidence="15" ref="1">
    <original>S</original>
    <variation>A</variation>
    <location>
        <position position="362"/>
    </location>
</feature>
<feature type="sequence conflict" description="In Ref. 2; AAB59189." evidence="15" ref="2">
    <original>R</original>
    <variation>P</variation>
    <location>
        <position position="1103"/>
    </location>
</feature>
<feature type="sequence conflict" description="In Ref. 6; AAX33465." evidence="15" ref="6">
    <original>I</original>
    <variation>S</variation>
    <location>
        <position position="1165"/>
    </location>
</feature>
<feature type="sequence conflict" description="In Ref. 5; AAQ22439." evidence="15" ref="5">
    <original>V</original>
    <variation>M</variation>
    <location>
        <position position="1374"/>
    </location>
</feature>
<feature type="sequence conflict" description="In Ref. 1; CAA44474." evidence="15" ref="1">
    <original>PH</original>
    <variation>KN</variation>
    <location>
        <begin position="1406"/>
        <end position="1407"/>
    </location>
</feature>
<feature type="sequence conflict" description="In Ref. 5; AAQ22439." evidence="15" ref="5">
    <original>N</original>
    <variation>S</variation>
    <location>
        <position position="1491"/>
    </location>
</feature>
<feature type="sequence conflict" description="In Ref. 2; AAB59189." evidence="15" ref="2">
    <original>V</original>
    <variation>I</variation>
    <location>
        <position position="1496"/>
    </location>
</feature>
<feature type="sequence conflict" description="In Ref. 2; AAB59189." evidence="15" ref="2">
    <original>S</original>
    <variation>G</variation>
    <location>
        <position position="1519"/>
    </location>
</feature>
<feature type="helix" evidence="16">
    <location>
        <begin position="1094"/>
        <end position="1100"/>
    </location>
</feature>
<feature type="helix" evidence="16">
    <location>
        <begin position="1109"/>
        <end position="1112"/>
    </location>
</feature>
<feature type="helix" evidence="16">
    <location>
        <begin position="1116"/>
        <end position="1120"/>
    </location>
</feature>
<feature type="helix" evidence="16">
    <location>
        <begin position="1123"/>
        <end position="1133"/>
    </location>
</feature>
<feature type="helix" evidence="16">
    <location>
        <begin position="1138"/>
        <end position="1150"/>
    </location>
</feature>
<feature type="helix" evidence="16">
    <location>
        <begin position="1152"/>
        <end position="1156"/>
    </location>
</feature>
<feature type="turn" evidence="16">
    <location>
        <begin position="1159"/>
        <end position="1161"/>
    </location>
</feature>
<feature type="helix" evidence="16">
    <location>
        <begin position="1162"/>
        <end position="1171"/>
    </location>
</feature>
<feature type="helix" evidence="16">
    <location>
        <begin position="1174"/>
        <end position="1184"/>
    </location>
</feature>
<feature type="helix" evidence="16">
    <location>
        <begin position="1188"/>
        <end position="1192"/>
    </location>
</feature>
<feature type="helix" evidence="16">
    <location>
        <begin position="1197"/>
        <end position="1207"/>
    </location>
</feature>
<feature type="helix" evidence="16">
    <location>
        <begin position="1210"/>
        <end position="1218"/>
    </location>
</feature>
<feature type="turn" evidence="16">
    <location>
        <begin position="1219"/>
        <end position="1222"/>
    </location>
</feature>
<feature type="helix" evidence="16">
    <location>
        <begin position="1224"/>
        <end position="1228"/>
    </location>
</feature>
<feature type="helix" evidence="16">
    <location>
        <begin position="1233"/>
        <end position="1243"/>
    </location>
</feature>
<feature type="helix" evidence="16">
    <location>
        <begin position="1246"/>
        <end position="1249"/>
    </location>
</feature>
<feature type="helix" evidence="16">
    <location>
        <begin position="1250"/>
        <end position="1256"/>
    </location>
</feature>
<feature type="turn" evidence="16">
    <location>
        <begin position="1257"/>
        <end position="1259"/>
    </location>
</feature>
<feature type="helix" evidence="16">
    <location>
        <begin position="1260"/>
        <end position="1264"/>
    </location>
</feature>
<feature type="helix" evidence="16">
    <location>
        <begin position="1269"/>
        <end position="1279"/>
    </location>
</feature>
<feature type="helix" evidence="16">
    <location>
        <begin position="1282"/>
        <end position="1292"/>
    </location>
</feature>
<feature type="helix" evidence="16">
    <location>
        <begin position="1296"/>
        <end position="1300"/>
    </location>
</feature>
<feature type="helix" evidence="16">
    <location>
        <begin position="1305"/>
        <end position="1315"/>
    </location>
</feature>
<feature type="helix" evidence="16">
    <location>
        <begin position="1318"/>
        <end position="1326"/>
    </location>
</feature>
<feature type="turn" evidence="16">
    <location>
        <begin position="1327"/>
        <end position="1330"/>
    </location>
</feature>
<feature type="helix" evidence="16">
    <location>
        <begin position="1332"/>
        <end position="1336"/>
    </location>
</feature>
<feature type="helix" evidence="16">
    <location>
        <begin position="1341"/>
        <end position="1351"/>
    </location>
</feature>
<feature type="helix" evidence="16">
    <location>
        <begin position="1354"/>
        <end position="1365"/>
    </location>
</feature>
<feature type="strand" evidence="16">
    <location>
        <begin position="1366"/>
        <end position="1370"/>
    </location>
</feature>
<feature type="helix" evidence="16">
    <location>
        <begin position="1371"/>
        <end position="1377"/>
    </location>
</feature>
<feature type="helix" evidence="16">
    <location>
        <begin position="1381"/>
        <end position="1391"/>
    </location>
</feature>
<feature type="helix" evidence="16">
    <location>
        <begin position="1394"/>
        <end position="1404"/>
    </location>
</feature>
<feature type="helix" evidence="16">
    <location>
        <begin position="1405"/>
        <end position="1407"/>
    </location>
</feature>
<feature type="helix" evidence="16">
    <location>
        <begin position="1408"/>
        <end position="1411"/>
    </location>
</feature>
<feature type="turn" evidence="16">
    <location>
        <begin position="1415"/>
        <end position="1417"/>
    </location>
</feature>
<feature type="helix" evidence="16">
    <location>
        <begin position="1418"/>
        <end position="1425"/>
    </location>
</feature>